<keyword id="KW-0010">Activator</keyword>
<keyword id="KW-0539">Nucleus</keyword>
<keyword id="KW-1185">Reference proteome</keyword>
<keyword id="KW-0804">Transcription</keyword>
<keyword id="KW-0805">Transcription regulation</keyword>
<comment type="function">
    <text evidence="1">Component of the Mediator complex, a coactivator involved in the regulated transcription of nearly all RNA polymerase II-dependent genes. Mediator functions as a bridge to convey information from gene-specific regulatory proteins to the basal RNA polymerase II transcription machinery. Mediator is recruited to promoters by direct interactions with regulatory proteins and serves as a scaffold for the assembly of a functional preinitiation complex with RNA polymerase II and the general transcription factors (By similarity).</text>
</comment>
<comment type="subunit">
    <text evidence="1">Component of the Mediator complex.</text>
</comment>
<comment type="subcellular location">
    <subcellularLocation>
        <location evidence="3">Nucleus</location>
    </subcellularLocation>
</comment>
<comment type="similarity">
    <text evidence="3">Belongs to the Mediator complex subunit 14 family.</text>
</comment>
<evidence type="ECO:0000250" key="1"/>
<evidence type="ECO:0000256" key="2">
    <source>
        <dbReference type="SAM" id="MobiDB-lite"/>
    </source>
</evidence>
<evidence type="ECO:0000305" key="3"/>
<proteinExistence type="inferred from homology"/>
<feature type="chain" id="PRO_0000304592" description="Mediator of RNA polymerase II transcription subunit 14">
    <location>
        <begin position="1"/>
        <end position="1112"/>
    </location>
</feature>
<feature type="region of interest" description="Disordered" evidence="2">
    <location>
        <begin position="1"/>
        <end position="76"/>
    </location>
</feature>
<feature type="region of interest" description="Disordered" evidence="2">
    <location>
        <begin position="120"/>
        <end position="141"/>
    </location>
</feature>
<feature type="region of interest" description="Disordered" evidence="2">
    <location>
        <begin position="1088"/>
        <end position="1112"/>
    </location>
</feature>
<feature type="compositionally biased region" description="Polar residues" evidence="2">
    <location>
        <begin position="20"/>
        <end position="39"/>
    </location>
</feature>
<feature type="compositionally biased region" description="Basic and acidic residues" evidence="2">
    <location>
        <begin position="64"/>
        <end position="73"/>
    </location>
</feature>
<feature type="compositionally biased region" description="Polar residues" evidence="2">
    <location>
        <begin position="1088"/>
        <end position="1099"/>
    </location>
</feature>
<organism>
    <name type="scientific">Aspergillus clavatus (strain ATCC 1007 / CBS 513.65 / DSM 816 / NCTC 3887 / NRRL 1 / QM 1276 / 107)</name>
    <dbReference type="NCBI Taxonomy" id="344612"/>
    <lineage>
        <taxon>Eukaryota</taxon>
        <taxon>Fungi</taxon>
        <taxon>Dikarya</taxon>
        <taxon>Ascomycota</taxon>
        <taxon>Pezizomycotina</taxon>
        <taxon>Eurotiomycetes</taxon>
        <taxon>Eurotiomycetidae</taxon>
        <taxon>Eurotiales</taxon>
        <taxon>Aspergillaceae</taxon>
        <taxon>Aspergillus</taxon>
        <taxon>Aspergillus subgen. Fumigati</taxon>
    </lineage>
</organism>
<sequence>MPGVVMDNATVGGPRRASESPDNVSSTPFPQERVNQSGDSGDRRNRSIFHNGAVKGAQGPGQHIETHTGKDGINESEGLPELAHITQGFFPFSTLVNRSVQQCWNDLSELVTELAAIQVSPHGQMPSTPANGKAPGDQSPENLQKKTRILDFAHAKRAEFIKLLVLSQWSRQAGDVSRLIDLQNFIRNRHQAFMDALQRIGDMKRDLVQAQVANPDLKTALEVLSKGRVVSITDLGYEAPKQLTAKGALKRLHKINRIISARLALHDTIPRPFRTYRVHDGRATFVVQGEFELDLSVGEESKSSQFFFVDIRFLFSPSSHVPKGRLSNELDVQVNDRLRDNGLKGCFDFLHGLVLTNKITILFKQAVELARGLWSDVLRVELLHRTLVVQYWALKLGAKSWIEIGIKSGRKPHDVKDSGVPYLALRWIRDGQEVDSTSVEFDADDLSMERLLRSIIALHISHLLSATYSILNQRSLFATGLLSLQALLNTNEPGKCQLLAQLTVSRHLRVSIEPMSGAIVLSADPSPLDRSESDSSLEKSSVDDIVSRVSRLRCIAALEEAESTVKILGFETVSPRGLKADVRKILPPNILRFALFWHPFWDRSWIVAATSSTDGDSWWVIHLRRPSALATSALNLDKDIHREATVCSGHVISNTFLAVQHLARDSSFADLSHCLSGMVAIHANASYLADLRSVAFQPPLRALKFESGLEVPNLLVRYQVSTLPRALQLVFPAGVGKKDFIRNTVRVAFHGIDQRRKVVIFVAYGNLLVPMKELSTLVSKLDGSLVFKQEGDSFAIRLLAPAGQPVIVQLFESLQRLECMLSIFEFLRRKKLVIRSLSLSQVAFAYGPRRSLAAVMDIGMSKLSNSEQLDPVDILARTDPLLLLRLGIRFDHSNPHRRIQGSLAAILNHTSNKAALDSVAEILSFTLPAMRTLDQITSNLSRGEPARLQVVVRNAFTFLLHYINYALRFELTASQHAGRLTWVLRESGDPQVGPGQDQIRAKLRDTLYNSNGNGWKGLGNGVVADVEGVCSVISNLDTSFAGARDNQETSGDVKPTERSLNQTDVKNHRDHDFDAQAAMDYDTSAVATNSAGARSSQQCDAPPEAADVITID</sequence>
<name>MED14_ASPCL</name>
<reference key="1">
    <citation type="journal article" date="2008" name="PLoS Genet.">
        <title>Genomic islands in the pathogenic filamentous fungus Aspergillus fumigatus.</title>
        <authorList>
            <person name="Fedorova N.D."/>
            <person name="Khaldi N."/>
            <person name="Joardar V.S."/>
            <person name="Maiti R."/>
            <person name="Amedeo P."/>
            <person name="Anderson M.J."/>
            <person name="Crabtree J."/>
            <person name="Silva J.C."/>
            <person name="Badger J.H."/>
            <person name="Albarraq A."/>
            <person name="Angiuoli S."/>
            <person name="Bussey H."/>
            <person name="Bowyer P."/>
            <person name="Cotty P.J."/>
            <person name="Dyer P.S."/>
            <person name="Egan A."/>
            <person name="Galens K."/>
            <person name="Fraser-Liggett C.M."/>
            <person name="Haas B.J."/>
            <person name="Inman J.M."/>
            <person name="Kent R."/>
            <person name="Lemieux S."/>
            <person name="Malavazi I."/>
            <person name="Orvis J."/>
            <person name="Roemer T."/>
            <person name="Ronning C.M."/>
            <person name="Sundaram J.P."/>
            <person name="Sutton G."/>
            <person name="Turner G."/>
            <person name="Venter J.C."/>
            <person name="White O.R."/>
            <person name="Whitty B.R."/>
            <person name="Youngman P."/>
            <person name="Wolfe K.H."/>
            <person name="Goldman G.H."/>
            <person name="Wortman J.R."/>
            <person name="Jiang B."/>
            <person name="Denning D.W."/>
            <person name="Nierman W.C."/>
        </authorList>
    </citation>
    <scope>NUCLEOTIDE SEQUENCE [LARGE SCALE GENOMIC DNA]</scope>
    <source>
        <strain>ATCC 1007 / CBS 513.65 / DSM 816 / NCTC 3887 / NRRL 1 / QM 1276 / 107</strain>
    </source>
</reference>
<gene>
    <name type="primary">rgr1</name>
    <name type="synonym">med14</name>
    <name type="ORF">ACLA_068140</name>
</gene>
<protein>
    <recommendedName>
        <fullName>Mediator of RNA polymerase II transcription subunit 14</fullName>
    </recommendedName>
    <alternativeName>
        <fullName>Mediator complex subunit 14</fullName>
    </alternativeName>
</protein>
<dbReference type="EMBL" id="DS027045">
    <property type="protein sequence ID" value="EAW13787.1"/>
    <property type="molecule type" value="Genomic_DNA"/>
</dbReference>
<dbReference type="RefSeq" id="XP_001275213.1">
    <property type="nucleotide sequence ID" value="XM_001275212.1"/>
</dbReference>
<dbReference type="STRING" id="344612.A1C5W6"/>
<dbReference type="EnsemblFungi" id="EAW13787">
    <property type="protein sequence ID" value="EAW13787"/>
    <property type="gene ID" value="ACLA_068140"/>
</dbReference>
<dbReference type="GeneID" id="4708110"/>
<dbReference type="KEGG" id="act:ACLA_068140"/>
<dbReference type="VEuPathDB" id="FungiDB:ACLA_068140"/>
<dbReference type="eggNOG" id="KOG1875">
    <property type="taxonomic scope" value="Eukaryota"/>
</dbReference>
<dbReference type="HOGENOM" id="CLU_003573_1_1_1"/>
<dbReference type="OMA" id="ITQGYIP"/>
<dbReference type="OrthoDB" id="205099at2759"/>
<dbReference type="Proteomes" id="UP000006701">
    <property type="component" value="Unassembled WGS sequence"/>
</dbReference>
<dbReference type="GO" id="GO:0070847">
    <property type="term" value="C:core mediator complex"/>
    <property type="evidence" value="ECO:0007669"/>
    <property type="project" value="TreeGrafter"/>
</dbReference>
<dbReference type="GO" id="GO:0016592">
    <property type="term" value="C:mediator complex"/>
    <property type="evidence" value="ECO:0007669"/>
    <property type="project" value="InterPro"/>
</dbReference>
<dbReference type="GO" id="GO:0003712">
    <property type="term" value="F:transcription coregulator activity"/>
    <property type="evidence" value="ECO:0007669"/>
    <property type="project" value="InterPro"/>
</dbReference>
<dbReference type="GO" id="GO:0006357">
    <property type="term" value="P:regulation of transcription by RNA polymerase II"/>
    <property type="evidence" value="ECO:0007669"/>
    <property type="project" value="InterPro"/>
</dbReference>
<dbReference type="InterPro" id="IPR055122">
    <property type="entry name" value="Med14_N"/>
</dbReference>
<dbReference type="InterPro" id="IPR013947">
    <property type="entry name" value="Mediator_Med14"/>
</dbReference>
<dbReference type="PANTHER" id="PTHR12809">
    <property type="entry name" value="MEDIATOR COMPLEX SUBUNIT"/>
    <property type="match status" value="1"/>
</dbReference>
<dbReference type="PANTHER" id="PTHR12809:SF2">
    <property type="entry name" value="MEDIATOR OF RNA POLYMERASE II TRANSCRIPTION SUBUNIT 14"/>
    <property type="match status" value="1"/>
</dbReference>
<dbReference type="Pfam" id="PF08638">
    <property type="entry name" value="Med14"/>
    <property type="match status" value="1"/>
</dbReference>
<accession>A1C5W6</accession>